<accession>Q5HTT8</accession>
<evidence type="ECO:0000255" key="1">
    <source>
        <dbReference type="HAMAP-Rule" id="MF_00236"/>
    </source>
</evidence>
<evidence type="ECO:0000256" key="2">
    <source>
        <dbReference type="SAM" id="MobiDB-lite"/>
    </source>
</evidence>
<keyword id="KW-0997">Cell inner membrane</keyword>
<keyword id="KW-1003">Cell membrane</keyword>
<keyword id="KW-0472">Membrane</keyword>
<keyword id="KW-0653">Protein transport</keyword>
<keyword id="KW-0811">Translocation</keyword>
<keyword id="KW-0812">Transmembrane</keyword>
<keyword id="KW-1133">Transmembrane helix</keyword>
<keyword id="KW-0813">Transport</keyword>
<dbReference type="EMBL" id="CP000025">
    <property type="protein sequence ID" value="AAW35631.1"/>
    <property type="molecule type" value="Genomic_DNA"/>
</dbReference>
<dbReference type="RefSeq" id="WP_002852866.1">
    <property type="nucleotide sequence ID" value="NC_003912.7"/>
</dbReference>
<dbReference type="SMR" id="Q5HTT8"/>
<dbReference type="KEGG" id="cjr:CJE1310"/>
<dbReference type="HOGENOM" id="CLU_086034_5_4_7"/>
<dbReference type="GO" id="GO:0033281">
    <property type="term" value="C:TAT protein transport complex"/>
    <property type="evidence" value="ECO:0007669"/>
    <property type="project" value="UniProtKB-UniRule"/>
</dbReference>
<dbReference type="GO" id="GO:0008320">
    <property type="term" value="F:protein transmembrane transporter activity"/>
    <property type="evidence" value="ECO:0007669"/>
    <property type="project" value="UniProtKB-UniRule"/>
</dbReference>
<dbReference type="GO" id="GO:0043953">
    <property type="term" value="P:protein transport by the Tat complex"/>
    <property type="evidence" value="ECO:0007669"/>
    <property type="project" value="UniProtKB-UniRule"/>
</dbReference>
<dbReference type="Gene3D" id="1.20.5.3310">
    <property type="match status" value="1"/>
</dbReference>
<dbReference type="HAMAP" id="MF_00236">
    <property type="entry name" value="TatA_E"/>
    <property type="match status" value="1"/>
</dbReference>
<dbReference type="InterPro" id="IPR003369">
    <property type="entry name" value="TatA/B/E"/>
</dbReference>
<dbReference type="InterPro" id="IPR006312">
    <property type="entry name" value="TatA/E"/>
</dbReference>
<dbReference type="NCBIfam" id="TIGR01411">
    <property type="entry name" value="tatAE"/>
    <property type="match status" value="1"/>
</dbReference>
<dbReference type="PANTHER" id="PTHR42982">
    <property type="entry name" value="SEC-INDEPENDENT PROTEIN TRANSLOCASE PROTEIN TATA"/>
    <property type="match status" value="1"/>
</dbReference>
<dbReference type="PANTHER" id="PTHR42982:SF1">
    <property type="entry name" value="SEC-INDEPENDENT PROTEIN TRANSLOCASE PROTEIN TATA"/>
    <property type="match status" value="1"/>
</dbReference>
<dbReference type="Pfam" id="PF02416">
    <property type="entry name" value="TatA_B_E"/>
    <property type="match status" value="1"/>
</dbReference>
<organism>
    <name type="scientific">Campylobacter jejuni (strain RM1221)</name>
    <dbReference type="NCBI Taxonomy" id="195099"/>
    <lineage>
        <taxon>Bacteria</taxon>
        <taxon>Pseudomonadati</taxon>
        <taxon>Campylobacterota</taxon>
        <taxon>Epsilonproteobacteria</taxon>
        <taxon>Campylobacterales</taxon>
        <taxon>Campylobacteraceae</taxon>
        <taxon>Campylobacter</taxon>
    </lineage>
</organism>
<name>TATA_CAMJR</name>
<sequence length="79" mass="8685">MGGWSSPSHWLIILLIVVLLFGAKKIPELAKGLGKGIKTFKDEMNNDDEVAKNTQKIEENKNTTNNTNADASIDETKKA</sequence>
<proteinExistence type="inferred from homology"/>
<gene>
    <name evidence="1" type="primary">tatA</name>
    <name type="ordered locus">CJE1310</name>
</gene>
<comment type="function">
    <text evidence="1">Part of the twin-arginine translocation (Tat) system that transports large folded proteins containing a characteristic twin-arginine motif in their signal peptide across membranes. TatA could form the protein-conducting channel of the Tat system.</text>
</comment>
<comment type="subunit">
    <text evidence="1">The Tat system comprises two distinct complexes: a TatABC complex, containing multiple copies of TatA, TatB and TatC subunits, and a separate TatA complex, containing only TatA subunits. Substrates initially bind to the TatABC complex, which probably triggers association of the separate TatA complex to form the active translocon.</text>
</comment>
<comment type="subcellular location">
    <subcellularLocation>
        <location evidence="1">Cell inner membrane</location>
        <topology evidence="1">Single-pass membrane protein</topology>
    </subcellularLocation>
</comment>
<comment type="similarity">
    <text evidence="1">Belongs to the TatA/E family.</text>
</comment>
<feature type="chain" id="PRO_1000044378" description="Sec-independent protein translocase protein TatA">
    <location>
        <begin position="1"/>
        <end position="79"/>
    </location>
</feature>
<feature type="transmembrane region" description="Helical" evidence="1">
    <location>
        <begin position="1"/>
        <end position="21"/>
    </location>
</feature>
<feature type="region of interest" description="Disordered" evidence="2">
    <location>
        <begin position="49"/>
        <end position="79"/>
    </location>
</feature>
<feature type="compositionally biased region" description="Basic and acidic residues" evidence="2">
    <location>
        <begin position="49"/>
        <end position="61"/>
    </location>
</feature>
<reference key="1">
    <citation type="journal article" date="2005" name="PLoS Biol.">
        <title>Major structural differences and novel potential virulence mechanisms from the genomes of multiple Campylobacter species.</title>
        <authorList>
            <person name="Fouts D.E."/>
            <person name="Mongodin E.F."/>
            <person name="Mandrell R.E."/>
            <person name="Miller W.G."/>
            <person name="Rasko D.A."/>
            <person name="Ravel J."/>
            <person name="Brinkac L.M."/>
            <person name="DeBoy R.T."/>
            <person name="Parker C.T."/>
            <person name="Daugherty S.C."/>
            <person name="Dodson R.J."/>
            <person name="Durkin A.S."/>
            <person name="Madupu R."/>
            <person name="Sullivan S.A."/>
            <person name="Shetty J.U."/>
            <person name="Ayodeji M.A."/>
            <person name="Shvartsbeyn A."/>
            <person name="Schatz M.C."/>
            <person name="Badger J.H."/>
            <person name="Fraser C.M."/>
            <person name="Nelson K.E."/>
        </authorList>
    </citation>
    <scope>NUCLEOTIDE SEQUENCE [LARGE SCALE GENOMIC DNA]</scope>
    <source>
        <strain>RM1221</strain>
    </source>
</reference>
<protein>
    <recommendedName>
        <fullName evidence="1">Sec-independent protein translocase protein TatA</fullName>
    </recommendedName>
</protein>